<accession>B1L838</accession>
<keyword id="KW-0068">Autocatalytic cleavage</keyword>
<keyword id="KW-0227">DNA damage</keyword>
<keyword id="KW-0234">DNA repair</keyword>
<keyword id="KW-0235">DNA replication</keyword>
<keyword id="KW-0238">DNA-binding</keyword>
<keyword id="KW-0378">Hydrolase</keyword>
<keyword id="KW-0678">Repressor</keyword>
<keyword id="KW-0742">SOS response</keyword>
<keyword id="KW-0804">Transcription</keyword>
<keyword id="KW-0805">Transcription regulation</keyword>
<protein>
    <recommendedName>
        <fullName evidence="1">LexA repressor</fullName>
        <ecNumber evidence="1">3.4.21.88</ecNumber>
    </recommendedName>
</protein>
<evidence type="ECO:0000255" key="1">
    <source>
        <dbReference type="HAMAP-Rule" id="MF_00015"/>
    </source>
</evidence>
<sequence length="197" mass="22822">MKDLTERQRKVLLFIEEFIEKNGYPPSVREIARRFRITPRGALLHLIALEKKGYIERKNGKPRALRVSKSIRNKIPLIGEIRAGEKREAIEYLEDYIEIPESFLSSGYDHFLLKVKGESMIEEHICDGDLVLVRRQDWAQNGDIVAAMVDGEVTLKKFYQRGDTVELRPANREMSSMFFKAEKVKILGKVVGVFRKL</sequence>
<comment type="function">
    <text evidence="1">Represses a number of genes involved in the response to DNA damage (SOS response), including recA and lexA. In the presence of single-stranded DNA, RecA interacts with LexA causing an autocatalytic cleavage which disrupts the DNA-binding part of LexA, leading to derepression of the SOS regulon and eventually DNA repair.</text>
</comment>
<comment type="catalytic activity">
    <reaction evidence="1">
        <text>Hydrolysis of Ala-|-Gly bond in repressor LexA.</text>
        <dbReference type="EC" id="3.4.21.88"/>
    </reaction>
</comment>
<comment type="subunit">
    <text evidence="1">Homodimer.</text>
</comment>
<comment type="similarity">
    <text evidence="1">Belongs to the peptidase S24 family.</text>
</comment>
<reference key="1">
    <citation type="journal article" date="2011" name="J. Bacteriol.">
        <title>Genome sequence of Thermotoga sp. strain RQ2, a hyperthermophilic bacterium isolated from a geothermally heated region of the seafloor near Ribeira Quente, the Azores.</title>
        <authorList>
            <person name="Swithers K.S."/>
            <person name="DiPippo J.L."/>
            <person name="Bruce D.C."/>
            <person name="Detter C."/>
            <person name="Tapia R."/>
            <person name="Han S."/>
            <person name="Saunders E."/>
            <person name="Goodwin L.A."/>
            <person name="Han J."/>
            <person name="Woyke T."/>
            <person name="Pitluck S."/>
            <person name="Pennacchio L."/>
            <person name="Nolan M."/>
            <person name="Mikhailova N."/>
            <person name="Lykidis A."/>
            <person name="Land M.L."/>
            <person name="Brettin T."/>
            <person name="Stetter K.O."/>
            <person name="Nelson K.E."/>
            <person name="Gogarten J.P."/>
            <person name="Noll K.M."/>
        </authorList>
    </citation>
    <scope>NUCLEOTIDE SEQUENCE [LARGE SCALE GENOMIC DNA]</scope>
    <source>
        <strain>RQ2</strain>
    </source>
</reference>
<organism>
    <name type="scientific">Thermotoga sp. (strain RQ2)</name>
    <dbReference type="NCBI Taxonomy" id="126740"/>
    <lineage>
        <taxon>Bacteria</taxon>
        <taxon>Thermotogati</taxon>
        <taxon>Thermotogota</taxon>
        <taxon>Thermotogae</taxon>
        <taxon>Thermotogales</taxon>
        <taxon>Thermotogaceae</taxon>
        <taxon>Thermotoga</taxon>
    </lineage>
</organism>
<feature type="chain" id="PRO_1000089601" description="LexA repressor">
    <location>
        <begin position="1"/>
        <end position="197"/>
    </location>
</feature>
<feature type="DNA-binding region" description="H-T-H motif" evidence="1">
    <location>
        <begin position="28"/>
        <end position="47"/>
    </location>
</feature>
<feature type="active site" description="For autocatalytic cleavage activity" evidence="1">
    <location>
        <position position="119"/>
    </location>
</feature>
<feature type="active site" description="For autocatalytic cleavage activity" evidence="1">
    <location>
        <position position="156"/>
    </location>
</feature>
<feature type="site" description="Cleavage; by autolysis" evidence="1">
    <location>
        <begin position="83"/>
        <end position="84"/>
    </location>
</feature>
<name>LEXA_THESQ</name>
<gene>
    <name evidence="1" type="primary">lexA</name>
    <name type="ordered locus">TRQ2_1735</name>
</gene>
<proteinExistence type="inferred from homology"/>
<dbReference type="EC" id="3.4.21.88" evidence="1"/>
<dbReference type="EMBL" id="CP000969">
    <property type="protein sequence ID" value="ACB10068.1"/>
    <property type="molecule type" value="Genomic_DNA"/>
</dbReference>
<dbReference type="RefSeq" id="WP_012311311.1">
    <property type="nucleotide sequence ID" value="NC_010483.1"/>
</dbReference>
<dbReference type="SMR" id="B1L838"/>
<dbReference type="MEROPS" id="S24.001"/>
<dbReference type="KEGG" id="trq:TRQ2_1735"/>
<dbReference type="HOGENOM" id="CLU_066192_45_1_0"/>
<dbReference type="Proteomes" id="UP000001687">
    <property type="component" value="Chromosome"/>
</dbReference>
<dbReference type="GO" id="GO:0003677">
    <property type="term" value="F:DNA binding"/>
    <property type="evidence" value="ECO:0007669"/>
    <property type="project" value="UniProtKB-UniRule"/>
</dbReference>
<dbReference type="GO" id="GO:0004252">
    <property type="term" value="F:serine-type endopeptidase activity"/>
    <property type="evidence" value="ECO:0007669"/>
    <property type="project" value="UniProtKB-UniRule"/>
</dbReference>
<dbReference type="GO" id="GO:0006281">
    <property type="term" value="P:DNA repair"/>
    <property type="evidence" value="ECO:0007669"/>
    <property type="project" value="UniProtKB-UniRule"/>
</dbReference>
<dbReference type="GO" id="GO:0006260">
    <property type="term" value="P:DNA replication"/>
    <property type="evidence" value="ECO:0007669"/>
    <property type="project" value="UniProtKB-UniRule"/>
</dbReference>
<dbReference type="GO" id="GO:0045892">
    <property type="term" value="P:negative regulation of DNA-templated transcription"/>
    <property type="evidence" value="ECO:0007669"/>
    <property type="project" value="UniProtKB-UniRule"/>
</dbReference>
<dbReference type="GO" id="GO:0006508">
    <property type="term" value="P:proteolysis"/>
    <property type="evidence" value="ECO:0007669"/>
    <property type="project" value="InterPro"/>
</dbReference>
<dbReference type="GO" id="GO:0009432">
    <property type="term" value="P:SOS response"/>
    <property type="evidence" value="ECO:0007669"/>
    <property type="project" value="UniProtKB-UniRule"/>
</dbReference>
<dbReference type="CDD" id="cd06529">
    <property type="entry name" value="S24_LexA-like"/>
    <property type="match status" value="1"/>
</dbReference>
<dbReference type="FunFam" id="2.10.109.10:FF:000001">
    <property type="entry name" value="LexA repressor"/>
    <property type="match status" value="1"/>
</dbReference>
<dbReference type="Gene3D" id="2.10.109.10">
    <property type="entry name" value="Umud Fragment, subunit A"/>
    <property type="match status" value="1"/>
</dbReference>
<dbReference type="Gene3D" id="1.10.10.10">
    <property type="entry name" value="Winged helix-like DNA-binding domain superfamily/Winged helix DNA-binding domain"/>
    <property type="match status" value="1"/>
</dbReference>
<dbReference type="HAMAP" id="MF_00015">
    <property type="entry name" value="LexA"/>
    <property type="match status" value="1"/>
</dbReference>
<dbReference type="InterPro" id="IPR006200">
    <property type="entry name" value="LexA"/>
</dbReference>
<dbReference type="InterPro" id="IPR039418">
    <property type="entry name" value="LexA-like"/>
</dbReference>
<dbReference type="InterPro" id="IPR036286">
    <property type="entry name" value="LexA/Signal_pep-like_sf"/>
</dbReference>
<dbReference type="InterPro" id="IPR006199">
    <property type="entry name" value="LexA_DNA-bd_dom"/>
</dbReference>
<dbReference type="InterPro" id="IPR050077">
    <property type="entry name" value="LexA_repressor"/>
</dbReference>
<dbReference type="InterPro" id="IPR006197">
    <property type="entry name" value="Peptidase_S24_LexA"/>
</dbReference>
<dbReference type="InterPro" id="IPR015927">
    <property type="entry name" value="Peptidase_S24_S26A/B/C"/>
</dbReference>
<dbReference type="InterPro" id="IPR036388">
    <property type="entry name" value="WH-like_DNA-bd_sf"/>
</dbReference>
<dbReference type="InterPro" id="IPR036390">
    <property type="entry name" value="WH_DNA-bd_sf"/>
</dbReference>
<dbReference type="NCBIfam" id="TIGR00498">
    <property type="entry name" value="lexA"/>
    <property type="match status" value="1"/>
</dbReference>
<dbReference type="PANTHER" id="PTHR33516">
    <property type="entry name" value="LEXA REPRESSOR"/>
    <property type="match status" value="1"/>
</dbReference>
<dbReference type="PANTHER" id="PTHR33516:SF2">
    <property type="entry name" value="LEXA REPRESSOR-RELATED"/>
    <property type="match status" value="1"/>
</dbReference>
<dbReference type="Pfam" id="PF01726">
    <property type="entry name" value="LexA_DNA_bind"/>
    <property type="match status" value="1"/>
</dbReference>
<dbReference type="Pfam" id="PF00717">
    <property type="entry name" value="Peptidase_S24"/>
    <property type="match status" value="1"/>
</dbReference>
<dbReference type="PRINTS" id="PR00726">
    <property type="entry name" value="LEXASERPTASE"/>
</dbReference>
<dbReference type="SUPFAM" id="SSF51306">
    <property type="entry name" value="LexA/Signal peptidase"/>
    <property type="match status" value="1"/>
</dbReference>
<dbReference type="SUPFAM" id="SSF46785">
    <property type="entry name" value="Winged helix' DNA-binding domain"/>
    <property type="match status" value="1"/>
</dbReference>